<sequence>MIARIWSGESSLWRLLLPLSWLYGLVSGAIRLSYKLGLKRAWRAPVPVVVVGNLTAGGNGKTPVVIWLVEKLQQRGVRVGVVSRGYGGKAAAYPLLLTPETTTAEAGDEPVLIYQRTGAPVAVAPERAAAVKAILAAHNVQIIITDDGLQHYRLARDIEIVVIDGVRRFGNGWWLPAGPMRERASRLKTVDAAIVNGGVARAGEIPMQLAPGLAVNLRTGARCDVAQLSNIVAMAGIGHPPRFFATLEACGAHPQKCVPLADHQTLAPADVQALVGEGQTLVMTEKDAVKCRAFAEDNWWFLPVDARLSGEQPDKLLEHITSLVR</sequence>
<keyword id="KW-0067">ATP-binding</keyword>
<keyword id="KW-0418">Kinase</keyword>
<keyword id="KW-0441">Lipid A biosynthesis</keyword>
<keyword id="KW-0444">Lipid biosynthesis</keyword>
<keyword id="KW-0443">Lipid metabolism</keyword>
<keyword id="KW-0547">Nucleotide-binding</keyword>
<keyword id="KW-0808">Transferase</keyword>
<evidence type="ECO:0000255" key="1">
    <source>
        <dbReference type="HAMAP-Rule" id="MF_00409"/>
    </source>
</evidence>
<proteinExistence type="inferred from homology"/>
<comment type="function">
    <text evidence="1">Transfers the gamma-phosphate of ATP to the 4'-position of a tetraacyldisaccharide 1-phosphate intermediate (termed DS-1-P) to form tetraacyldisaccharide 1,4'-bis-phosphate (lipid IVA).</text>
</comment>
<comment type="catalytic activity">
    <reaction evidence="1">
        <text>a lipid A disaccharide + ATP = a lipid IVA + ADP + H(+)</text>
        <dbReference type="Rhea" id="RHEA:67840"/>
        <dbReference type="ChEBI" id="CHEBI:15378"/>
        <dbReference type="ChEBI" id="CHEBI:30616"/>
        <dbReference type="ChEBI" id="CHEBI:176343"/>
        <dbReference type="ChEBI" id="CHEBI:176425"/>
        <dbReference type="ChEBI" id="CHEBI:456216"/>
        <dbReference type="EC" id="2.7.1.130"/>
    </reaction>
</comment>
<comment type="pathway">
    <text evidence="1">Glycolipid biosynthesis; lipid IV(A) biosynthesis; lipid IV(A) from (3R)-3-hydroxytetradecanoyl-[acyl-carrier-protein] and UDP-N-acetyl-alpha-D-glucosamine: step 6/6.</text>
</comment>
<comment type="similarity">
    <text evidence="1">Belongs to the LpxK family.</text>
</comment>
<accession>Q5PGH1</accession>
<dbReference type="EC" id="2.7.1.130" evidence="1"/>
<dbReference type="EMBL" id="CP000026">
    <property type="protein sequence ID" value="AAV77729.1"/>
    <property type="molecule type" value="Genomic_DNA"/>
</dbReference>
<dbReference type="RefSeq" id="WP_000561702.1">
    <property type="nucleotide sequence ID" value="NC_006511.1"/>
</dbReference>
<dbReference type="SMR" id="Q5PGH1"/>
<dbReference type="KEGG" id="spt:SPA1813"/>
<dbReference type="HOGENOM" id="CLU_038816_2_0_6"/>
<dbReference type="UniPathway" id="UPA00359">
    <property type="reaction ID" value="UER00482"/>
</dbReference>
<dbReference type="Proteomes" id="UP000008185">
    <property type="component" value="Chromosome"/>
</dbReference>
<dbReference type="GO" id="GO:0005886">
    <property type="term" value="C:plasma membrane"/>
    <property type="evidence" value="ECO:0007669"/>
    <property type="project" value="TreeGrafter"/>
</dbReference>
<dbReference type="GO" id="GO:0005524">
    <property type="term" value="F:ATP binding"/>
    <property type="evidence" value="ECO:0007669"/>
    <property type="project" value="UniProtKB-UniRule"/>
</dbReference>
<dbReference type="GO" id="GO:0009029">
    <property type="term" value="F:tetraacyldisaccharide 4'-kinase activity"/>
    <property type="evidence" value="ECO:0007669"/>
    <property type="project" value="UniProtKB-UniRule"/>
</dbReference>
<dbReference type="GO" id="GO:0009245">
    <property type="term" value="P:lipid A biosynthetic process"/>
    <property type="evidence" value="ECO:0007669"/>
    <property type="project" value="UniProtKB-UniRule"/>
</dbReference>
<dbReference type="GO" id="GO:0009244">
    <property type="term" value="P:lipopolysaccharide core region biosynthetic process"/>
    <property type="evidence" value="ECO:0007669"/>
    <property type="project" value="TreeGrafter"/>
</dbReference>
<dbReference type="HAMAP" id="MF_00409">
    <property type="entry name" value="LpxK"/>
    <property type="match status" value="1"/>
</dbReference>
<dbReference type="InterPro" id="IPR003758">
    <property type="entry name" value="LpxK"/>
</dbReference>
<dbReference type="InterPro" id="IPR027417">
    <property type="entry name" value="P-loop_NTPase"/>
</dbReference>
<dbReference type="NCBIfam" id="TIGR00682">
    <property type="entry name" value="lpxK"/>
    <property type="match status" value="1"/>
</dbReference>
<dbReference type="PANTHER" id="PTHR42724">
    <property type="entry name" value="TETRAACYLDISACCHARIDE 4'-KINASE"/>
    <property type="match status" value="1"/>
</dbReference>
<dbReference type="PANTHER" id="PTHR42724:SF1">
    <property type="entry name" value="TETRAACYLDISACCHARIDE 4'-KINASE, MITOCHONDRIAL-RELATED"/>
    <property type="match status" value="1"/>
</dbReference>
<dbReference type="Pfam" id="PF02606">
    <property type="entry name" value="LpxK"/>
    <property type="match status" value="1"/>
</dbReference>
<dbReference type="SUPFAM" id="SSF52540">
    <property type="entry name" value="P-loop containing nucleoside triphosphate hydrolases"/>
    <property type="match status" value="1"/>
</dbReference>
<organism>
    <name type="scientific">Salmonella paratyphi A (strain ATCC 9150 / SARB42)</name>
    <dbReference type="NCBI Taxonomy" id="295319"/>
    <lineage>
        <taxon>Bacteria</taxon>
        <taxon>Pseudomonadati</taxon>
        <taxon>Pseudomonadota</taxon>
        <taxon>Gammaproteobacteria</taxon>
        <taxon>Enterobacterales</taxon>
        <taxon>Enterobacteriaceae</taxon>
        <taxon>Salmonella</taxon>
    </lineage>
</organism>
<gene>
    <name evidence="1" type="primary">lpxK</name>
    <name type="ordered locus">SPA1813</name>
</gene>
<protein>
    <recommendedName>
        <fullName evidence="1">Tetraacyldisaccharide 4'-kinase</fullName>
        <ecNumber evidence="1">2.7.1.130</ecNumber>
    </recommendedName>
    <alternativeName>
        <fullName evidence="1">Lipid A 4'-kinase</fullName>
    </alternativeName>
</protein>
<feature type="chain" id="PRO_0000229979" description="Tetraacyldisaccharide 4'-kinase">
    <location>
        <begin position="1"/>
        <end position="325"/>
    </location>
</feature>
<feature type="binding site" evidence="1">
    <location>
        <begin position="55"/>
        <end position="62"/>
    </location>
    <ligand>
        <name>ATP</name>
        <dbReference type="ChEBI" id="CHEBI:30616"/>
    </ligand>
</feature>
<reference key="1">
    <citation type="journal article" date="2004" name="Nat. Genet.">
        <title>Comparison of genome degradation in Paratyphi A and Typhi, human-restricted serovars of Salmonella enterica that cause typhoid.</title>
        <authorList>
            <person name="McClelland M."/>
            <person name="Sanderson K.E."/>
            <person name="Clifton S.W."/>
            <person name="Latreille P."/>
            <person name="Porwollik S."/>
            <person name="Sabo A."/>
            <person name="Meyer R."/>
            <person name="Bieri T."/>
            <person name="Ozersky P."/>
            <person name="McLellan M."/>
            <person name="Harkins C.R."/>
            <person name="Wang C."/>
            <person name="Nguyen C."/>
            <person name="Berghoff A."/>
            <person name="Elliott G."/>
            <person name="Kohlberg S."/>
            <person name="Strong C."/>
            <person name="Du F."/>
            <person name="Carter J."/>
            <person name="Kremizki C."/>
            <person name="Layman D."/>
            <person name="Leonard S."/>
            <person name="Sun H."/>
            <person name="Fulton L."/>
            <person name="Nash W."/>
            <person name="Miner T."/>
            <person name="Minx P."/>
            <person name="Delehaunty K."/>
            <person name="Fronick C."/>
            <person name="Magrini V."/>
            <person name="Nhan M."/>
            <person name="Warren W."/>
            <person name="Florea L."/>
            <person name="Spieth J."/>
            <person name="Wilson R.K."/>
        </authorList>
    </citation>
    <scope>NUCLEOTIDE SEQUENCE [LARGE SCALE GENOMIC DNA]</scope>
    <source>
        <strain>ATCC 9150 / SARB42</strain>
    </source>
</reference>
<name>LPXK_SALPA</name>